<protein>
    <recommendedName>
        <fullName>Keratin, type I cytoskeletal 47 kDa</fullName>
    </recommendedName>
</protein>
<reference key="1">
    <citation type="submission" date="1987-07" db="EMBL/GenBank/DDBJ databases">
        <authorList>
            <person name="Miyatani S."/>
        </authorList>
    </citation>
    <scope>NUCLEOTIDE SEQUENCE [GENOMIC DNA]</scope>
</reference>
<reference key="2">
    <citation type="journal article" date="1986" name="J. Cell Biol.">
        <title>Stage-specific keratins in Xenopus laevis embryos and tadpoles: the XK81 gene family.</title>
        <authorList>
            <person name="Miyatani S."/>
            <person name="Winkles J.A."/>
            <person name="Sargent T.D."/>
            <person name="Dawid I.B."/>
        </authorList>
    </citation>
    <scope>NUCLEOTIDE SEQUENCE [GENOMIC DNA] OF 147-280</scope>
</reference>
<sequence>MSFRSSSSYSVQSKNVSGGGGFGSSYGGGSSSSFGGGYGAGFGGGYGAGFGGGASSGFSSSSSGGFGAAAASSSFSSFGGNDKQTMQNLNDRLASYLEKVRALEAANADLELKIREWYEKQKGSGIGAASKDFSKYFEIISDLRNKILFATIDNPRVVLQIDDAKLAADDFRLKFENELALRQSVEADINGLRRVLDELTLARGDLEMQIESLTEELAYLKKNHEEEMSIAKGSAAGQVTVEMDAAPGVDLNKILSDMRADYETLAEKNRRDAELWFNQK</sequence>
<gene>
    <name type="primary">xk81b1</name>
</gene>
<dbReference type="EMBL" id="X04805">
    <property type="protein sequence ID" value="CAA28497.1"/>
    <property type="molecule type" value="Genomic_DNA"/>
</dbReference>
<dbReference type="SMR" id="P05782"/>
<dbReference type="AGR" id="Xenbase:XB-GENE-17333623"/>
<dbReference type="Xenbase" id="XB-GENE-17333623">
    <property type="gene designation" value="krt12.5.L"/>
</dbReference>
<dbReference type="Proteomes" id="UP000186698">
    <property type="component" value="Unplaced"/>
</dbReference>
<dbReference type="GO" id="GO:0005856">
    <property type="term" value="C:cytoskeleton"/>
    <property type="evidence" value="ECO:0000318"/>
    <property type="project" value="GO_Central"/>
</dbReference>
<dbReference type="GO" id="GO:0005882">
    <property type="term" value="C:intermediate filament"/>
    <property type="evidence" value="ECO:0007669"/>
    <property type="project" value="UniProtKB-KW"/>
</dbReference>
<dbReference type="GO" id="GO:0005198">
    <property type="term" value="F:structural molecule activity"/>
    <property type="evidence" value="ECO:0007669"/>
    <property type="project" value="InterPro"/>
</dbReference>
<dbReference type="GO" id="GO:0030855">
    <property type="term" value="P:epithelial cell differentiation"/>
    <property type="evidence" value="ECO:0000318"/>
    <property type="project" value="GO_Central"/>
</dbReference>
<dbReference type="GO" id="GO:0045109">
    <property type="term" value="P:intermediate filament organization"/>
    <property type="evidence" value="ECO:0000318"/>
    <property type="project" value="GO_Central"/>
</dbReference>
<dbReference type="FunFam" id="1.20.5.1160:FF:000002">
    <property type="entry name" value="Type I keratin 10"/>
    <property type="match status" value="1"/>
</dbReference>
<dbReference type="Gene3D" id="1.20.5.500">
    <property type="entry name" value="Single helix bin"/>
    <property type="match status" value="1"/>
</dbReference>
<dbReference type="Gene3D" id="1.20.5.1160">
    <property type="entry name" value="Vasodilator-stimulated phosphoprotein"/>
    <property type="match status" value="1"/>
</dbReference>
<dbReference type="InterPro" id="IPR039008">
    <property type="entry name" value="IF_rod_dom"/>
</dbReference>
<dbReference type="InterPro" id="IPR002957">
    <property type="entry name" value="Keratin_I"/>
</dbReference>
<dbReference type="PANTHER" id="PTHR23239">
    <property type="entry name" value="INTERMEDIATE FILAMENT"/>
    <property type="match status" value="1"/>
</dbReference>
<dbReference type="PANTHER" id="PTHR23239:SF137">
    <property type="entry name" value="KERATIN, TYPE I CYTOSKELETAL 10"/>
    <property type="match status" value="1"/>
</dbReference>
<dbReference type="Pfam" id="PF00038">
    <property type="entry name" value="Filament"/>
    <property type="match status" value="1"/>
</dbReference>
<dbReference type="PRINTS" id="PR01248">
    <property type="entry name" value="TYPE1KERATIN"/>
</dbReference>
<dbReference type="SMART" id="SM01391">
    <property type="entry name" value="Filament"/>
    <property type="match status" value="1"/>
</dbReference>
<dbReference type="SUPFAM" id="SSF64593">
    <property type="entry name" value="Intermediate filament protein, coiled coil region"/>
    <property type="match status" value="1"/>
</dbReference>
<dbReference type="PROSITE" id="PS51842">
    <property type="entry name" value="IF_ROD_2"/>
    <property type="match status" value="1"/>
</dbReference>
<keyword id="KW-0175">Coiled coil</keyword>
<keyword id="KW-0403">Intermediate filament</keyword>
<keyword id="KW-0416">Keratin</keyword>
<keyword id="KW-1185">Reference proteome</keyword>
<evidence type="ECO:0000255" key="1">
    <source>
        <dbReference type="PROSITE-ProRule" id="PRU01188"/>
    </source>
</evidence>
<proteinExistence type="inferred from homology"/>
<name>K1C3_XENLA</name>
<organism>
    <name type="scientific">Xenopus laevis</name>
    <name type="common">African clawed frog</name>
    <dbReference type="NCBI Taxonomy" id="8355"/>
    <lineage>
        <taxon>Eukaryota</taxon>
        <taxon>Metazoa</taxon>
        <taxon>Chordata</taxon>
        <taxon>Craniata</taxon>
        <taxon>Vertebrata</taxon>
        <taxon>Euteleostomi</taxon>
        <taxon>Amphibia</taxon>
        <taxon>Batrachia</taxon>
        <taxon>Anura</taxon>
        <taxon>Pipoidea</taxon>
        <taxon>Pipidae</taxon>
        <taxon>Xenopodinae</taxon>
        <taxon>Xenopus</taxon>
        <taxon>Xenopus</taxon>
    </lineage>
</organism>
<comment type="subunit">
    <text>Heterotetramer of two type I and two type II keratins.</text>
</comment>
<comment type="miscellaneous">
    <text>There are two types of cytoskeletal and microfibrillar keratin: I (acidic; 40-55 kDa) and II (neutral to basic; 56-70 kDa).</text>
</comment>
<comment type="similarity">
    <text evidence="1">Belongs to the intermediate filament family.</text>
</comment>
<feature type="chain" id="PRO_0000063682" description="Keratin, type I cytoskeletal 47 kDa">
    <location>
        <begin position="1"/>
        <end position="280" status="greater than"/>
    </location>
</feature>
<feature type="domain" description="IF rod" evidence="1">
    <location>
        <begin position="82"/>
        <end position="280" status="greater than"/>
    </location>
</feature>
<feature type="region of interest" description="Head">
    <location>
        <begin position="1"/>
        <end position="81"/>
    </location>
</feature>
<feature type="region of interest" description="Coil 1A">
    <location>
        <begin position="82"/>
        <end position="117"/>
    </location>
</feature>
<feature type="region of interest" description="Linker 1">
    <location>
        <begin position="118"/>
        <end position="139"/>
    </location>
</feature>
<feature type="region of interest" description="Coil 1B">
    <location>
        <begin position="140"/>
        <end position="231"/>
    </location>
</feature>
<feature type="region of interest" description="Linker 12">
    <location>
        <begin position="232"/>
        <end position="254"/>
    </location>
</feature>
<feature type="region of interest" description="Coil 2">
    <location>
        <begin position="255"/>
        <end position="280" status="greater than"/>
    </location>
</feature>
<feature type="non-terminal residue">
    <location>
        <position position="280"/>
    </location>
</feature>
<accession>P05782</accession>